<organism>
    <name type="scientific">Paralichthys olivaceus</name>
    <name type="common">Bastard halibut</name>
    <name type="synonym">Hippoglossus olivaceus</name>
    <dbReference type="NCBI Taxonomy" id="8255"/>
    <lineage>
        <taxon>Eukaryota</taxon>
        <taxon>Metazoa</taxon>
        <taxon>Chordata</taxon>
        <taxon>Craniata</taxon>
        <taxon>Vertebrata</taxon>
        <taxon>Euteleostomi</taxon>
        <taxon>Actinopterygii</taxon>
        <taxon>Neopterygii</taxon>
        <taxon>Teleostei</taxon>
        <taxon>Neoteleostei</taxon>
        <taxon>Acanthomorphata</taxon>
        <taxon>Carangaria</taxon>
        <taxon>Pleuronectiformes</taxon>
        <taxon>Pleuronectoidei</taxon>
        <taxon>Paralichthyidae</taxon>
        <taxon>Paralichthys</taxon>
    </lineage>
</organism>
<gene>
    <name type="primary">rpl31</name>
</gene>
<protein>
    <recommendedName>
        <fullName evidence="2">Large ribosomal subunit protein eL31</fullName>
    </recommendedName>
    <alternativeName>
        <fullName>60S ribosomal protein L31</fullName>
    </alternativeName>
</protein>
<accession>Q9IA76</accession>
<evidence type="ECO:0000250" key="1">
    <source>
        <dbReference type="UniProtKB" id="P62899"/>
    </source>
</evidence>
<evidence type="ECO:0000305" key="2"/>
<name>RL31_PAROL</name>
<keyword id="KW-0963">Cytoplasm</keyword>
<keyword id="KW-0687">Ribonucleoprotein</keyword>
<keyword id="KW-0689">Ribosomal protein</keyword>
<comment type="function">
    <text evidence="1">Component of the large ribosomal subunit. The ribosome is a large ribonucleoprotein complex responsible for the synthesis of proteins in the cell.</text>
</comment>
<comment type="subunit">
    <text evidence="1">Component of the large ribosomal subunit.</text>
</comment>
<comment type="subcellular location">
    <subcellularLocation>
        <location evidence="1">Cytoplasm</location>
    </subcellularLocation>
</comment>
<comment type="similarity">
    <text evidence="2">Belongs to the eukaryotic ribosomal protein eL31 family.</text>
</comment>
<feature type="chain" id="PRO_0000153769" description="Large ribosomal subunit protein eL31">
    <location>
        <begin position="1"/>
        <end position="124"/>
    </location>
</feature>
<proteinExistence type="evidence at transcript level"/>
<reference key="1">
    <citation type="submission" date="2000-01" db="EMBL/GenBank/DDBJ databases">
        <authorList>
            <person name="Lee J."/>
            <person name="Jeon J."/>
            <person name="Song Y."/>
        </authorList>
    </citation>
    <scope>NUCLEOTIDE SEQUENCE [MRNA]</scope>
    <source>
        <tissue>Liver</tissue>
    </source>
</reference>
<sequence length="124" mass="14291">MAPTKKGEKKKGRSAINEVVTREYTINVHKRIHGVGFKKRAPRAIKEIRKFAVKEMGTPDVRIDTRLNKAVWSKGVRNVPYRIRVRLSRKRNEDEDSPNKLYTLVTYVPVTTCKGLQTVNVDEN</sequence>
<dbReference type="EMBL" id="AF220551">
    <property type="protein sequence ID" value="AAF61070.1"/>
    <property type="molecule type" value="mRNA"/>
</dbReference>
<dbReference type="RefSeq" id="XP_019961609.1">
    <property type="nucleotide sequence ID" value="XM_020106050.2"/>
</dbReference>
<dbReference type="RefSeq" id="XP_069376725.1">
    <property type="nucleotide sequence ID" value="XM_069520624.1"/>
</dbReference>
<dbReference type="SMR" id="Q9IA76"/>
<dbReference type="GeneID" id="109641554"/>
<dbReference type="KEGG" id="pov:109641554"/>
<dbReference type="CTD" id="6160"/>
<dbReference type="OrthoDB" id="333040at7898"/>
<dbReference type="GO" id="GO:0022625">
    <property type="term" value="C:cytosolic large ribosomal subunit"/>
    <property type="evidence" value="ECO:0007669"/>
    <property type="project" value="TreeGrafter"/>
</dbReference>
<dbReference type="GO" id="GO:0003735">
    <property type="term" value="F:structural constituent of ribosome"/>
    <property type="evidence" value="ECO:0007669"/>
    <property type="project" value="InterPro"/>
</dbReference>
<dbReference type="GO" id="GO:0002181">
    <property type="term" value="P:cytoplasmic translation"/>
    <property type="evidence" value="ECO:0007669"/>
    <property type="project" value="TreeGrafter"/>
</dbReference>
<dbReference type="CDD" id="cd00463">
    <property type="entry name" value="Ribosomal_L31e"/>
    <property type="match status" value="1"/>
</dbReference>
<dbReference type="FunFam" id="3.10.440.10:FF:000001">
    <property type="entry name" value="60S ribosomal protein L31"/>
    <property type="match status" value="1"/>
</dbReference>
<dbReference type="Gene3D" id="3.10.440.10">
    <property type="match status" value="1"/>
</dbReference>
<dbReference type="InterPro" id="IPR000054">
    <property type="entry name" value="Ribosomal_eL31"/>
</dbReference>
<dbReference type="InterPro" id="IPR020052">
    <property type="entry name" value="Ribosomal_eL31_CS"/>
</dbReference>
<dbReference type="InterPro" id="IPR023621">
    <property type="entry name" value="Ribosomal_eL31_dom_sf"/>
</dbReference>
<dbReference type="PANTHER" id="PTHR10956">
    <property type="entry name" value="60S RIBOSOMAL PROTEIN L31"/>
    <property type="match status" value="1"/>
</dbReference>
<dbReference type="PANTHER" id="PTHR10956:SF0">
    <property type="entry name" value="60S RIBOSOMAL PROTEIN L31"/>
    <property type="match status" value="1"/>
</dbReference>
<dbReference type="Pfam" id="PF01198">
    <property type="entry name" value="Ribosomal_L31e"/>
    <property type="match status" value="1"/>
</dbReference>
<dbReference type="SMART" id="SM01380">
    <property type="entry name" value="Ribosomal_L31e"/>
    <property type="match status" value="1"/>
</dbReference>
<dbReference type="SUPFAM" id="SSF54575">
    <property type="entry name" value="Ribosomal protein L31e"/>
    <property type="match status" value="1"/>
</dbReference>
<dbReference type="PROSITE" id="PS01144">
    <property type="entry name" value="RIBOSOMAL_L31E"/>
    <property type="match status" value="1"/>
</dbReference>